<protein>
    <recommendedName>
        <fullName>Tubulin alpha-A chain</fullName>
        <ecNumber evidence="2">3.6.5.-</ecNumber>
    </recommendedName>
</protein>
<keyword id="KW-0963">Cytoplasm</keyword>
<keyword id="KW-0206">Cytoskeleton</keyword>
<keyword id="KW-0342">GTP-binding</keyword>
<keyword id="KW-0378">Hydrolase</keyword>
<keyword id="KW-0460">Magnesium</keyword>
<keyword id="KW-0479">Metal-binding</keyword>
<keyword id="KW-0493">Microtubule</keyword>
<keyword id="KW-0547">Nucleotide-binding</keyword>
<keyword id="KW-1185">Reference proteome</keyword>
<reference key="1">
    <citation type="journal article" date="1997" name="FEMS Microbiol. Lett.">
        <title>Molecular cloning and expression studies of two divergent alpha-tubulin genes in Neurospora crassa.</title>
        <authorList>
            <person name="Monnat J."/>
            <person name="Ortega Perez R."/>
            <person name="Turian G."/>
        </authorList>
    </citation>
    <scope>NUCLEOTIDE SEQUENCE [MRNA]</scope>
    <source>
        <strain>74-ORS-6a / FGSC 4200</strain>
    </source>
</reference>
<reference key="2">
    <citation type="journal article" date="2003" name="Nature">
        <title>The genome sequence of the filamentous fungus Neurospora crassa.</title>
        <authorList>
            <person name="Galagan J.E."/>
            <person name="Calvo S.E."/>
            <person name="Borkovich K.A."/>
            <person name="Selker E.U."/>
            <person name="Read N.D."/>
            <person name="Jaffe D.B."/>
            <person name="FitzHugh W."/>
            <person name="Ma L.-J."/>
            <person name="Smirnov S."/>
            <person name="Purcell S."/>
            <person name="Rehman B."/>
            <person name="Elkins T."/>
            <person name="Engels R."/>
            <person name="Wang S."/>
            <person name="Nielsen C.B."/>
            <person name="Butler J."/>
            <person name="Endrizzi M."/>
            <person name="Qui D."/>
            <person name="Ianakiev P."/>
            <person name="Bell-Pedersen D."/>
            <person name="Nelson M.A."/>
            <person name="Werner-Washburne M."/>
            <person name="Selitrennikoff C.P."/>
            <person name="Kinsey J.A."/>
            <person name="Braun E.L."/>
            <person name="Zelter A."/>
            <person name="Schulte U."/>
            <person name="Kothe G.O."/>
            <person name="Jedd G."/>
            <person name="Mewes H.-W."/>
            <person name="Staben C."/>
            <person name="Marcotte E."/>
            <person name="Greenberg D."/>
            <person name="Roy A."/>
            <person name="Foley K."/>
            <person name="Naylor J."/>
            <person name="Stange-Thomann N."/>
            <person name="Barrett R."/>
            <person name="Gnerre S."/>
            <person name="Kamal M."/>
            <person name="Kamvysselis M."/>
            <person name="Mauceli E.W."/>
            <person name="Bielke C."/>
            <person name="Rudd S."/>
            <person name="Frishman D."/>
            <person name="Krystofova S."/>
            <person name="Rasmussen C."/>
            <person name="Metzenberg R.L."/>
            <person name="Perkins D.D."/>
            <person name="Kroken S."/>
            <person name="Cogoni C."/>
            <person name="Macino G."/>
            <person name="Catcheside D.E.A."/>
            <person name="Li W."/>
            <person name="Pratt R.J."/>
            <person name="Osmani S.A."/>
            <person name="DeSouza C.P.C."/>
            <person name="Glass N.L."/>
            <person name="Orbach M.J."/>
            <person name="Berglund J.A."/>
            <person name="Voelker R."/>
            <person name="Yarden O."/>
            <person name="Plamann M."/>
            <person name="Seiler S."/>
            <person name="Dunlap J.C."/>
            <person name="Radford A."/>
            <person name="Aramayo R."/>
            <person name="Natvig D.O."/>
            <person name="Alex L.A."/>
            <person name="Mannhaupt G."/>
            <person name="Ebbole D.J."/>
            <person name="Freitag M."/>
            <person name="Paulsen I."/>
            <person name="Sachs M.S."/>
            <person name="Lander E.S."/>
            <person name="Nusbaum C."/>
            <person name="Birren B.W."/>
        </authorList>
    </citation>
    <scope>NUCLEOTIDE SEQUENCE [LARGE SCALE GENOMIC DNA]</scope>
    <source>
        <strain>ATCC 24698 / 74-OR23-1A / CBS 708.71 / DSM 1257 / FGSC 987</strain>
    </source>
</reference>
<proteinExistence type="evidence at transcript level"/>
<accession>P38668</accession>
<accession>Q7RVS0</accession>
<dbReference type="EC" id="3.6.5.-" evidence="2"/>
<dbReference type="EMBL" id="X79403">
    <property type="protein sequence ID" value="CAA55940.1"/>
    <property type="molecule type" value="mRNA"/>
</dbReference>
<dbReference type="EMBL" id="CM002236">
    <property type="protein sequence ID" value="EAA29668.2"/>
    <property type="molecule type" value="Genomic_DNA"/>
</dbReference>
<dbReference type="PIR" id="S45050">
    <property type="entry name" value="S45050"/>
</dbReference>
<dbReference type="RefSeq" id="XP_958904.2">
    <property type="nucleotide sequence ID" value="XM_953811.3"/>
</dbReference>
<dbReference type="SMR" id="P38668"/>
<dbReference type="STRING" id="367110.P38668"/>
<dbReference type="PaxDb" id="5141-EFNCRP00000006439"/>
<dbReference type="EnsemblFungi" id="EAA29668">
    <property type="protein sequence ID" value="EAA29668"/>
    <property type="gene ID" value="NCU09132"/>
</dbReference>
<dbReference type="GeneID" id="3875052"/>
<dbReference type="KEGG" id="ncr:NCU09132"/>
<dbReference type="VEuPathDB" id="FungiDB:NCU09132"/>
<dbReference type="HOGENOM" id="CLU_015718_1_1_1"/>
<dbReference type="InParanoid" id="P38668"/>
<dbReference type="OMA" id="RRVTDNC"/>
<dbReference type="OrthoDB" id="1662883at2759"/>
<dbReference type="Proteomes" id="UP000001805">
    <property type="component" value="Chromosome 1, Linkage Group I"/>
</dbReference>
<dbReference type="GO" id="GO:0005737">
    <property type="term" value="C:cytoplasm"/>
    <property type="evidence" value="ECO:0000318"/>
    <property type="project" value="GO_Central"/>
</dbReference>
<dbReference type="GO" id="GO:0005874">
    <property type="term" value="C:microtubule"/>
    <property type="evidence" value="ECO:0000318"/>
    <property type="project" value="GO_Central"/>
</dbReference>
<dbReference type="GO" id="GO:0005634">
    <property type="term" value="C:nucleus"/>
    <property type="evidence" value="ECO:0000318"/>
    <property type="project" value="GO_Central"/>
</dbReference>
<dbReference type="GO" id="GO:0005819">
    <property type="term" value="C:spindle"/>
    <property type="evidence" value="ECO:0000318"/>
    <property type="project" value="GO_Central"/>
</dbReference>
<dbReference type="GO" id="GO:0005525">
    <property type="term" value="F:GTP binding"/>
    <property type="evidence" value="ECO:0000318"/>
    <property type="project" value="GO_Central"/>
</dbReference>
<dbReference type="GO" id="GO:0016787">
    <property type="term" value="F:hydrolase activity"/>
    <property type="evidence" value="ECO:0007669"/>
    <property type="project" value="UniProtKB-KW"/>
</dbReference>
<dbReference type="GO" id="GO:0046872">
    <property type="term" value="F:metal ion binding"/>
    <property type="evidence" value="ECO:0007669"/>
    <property type="project" value="UniProtKB-KW"/>
</dbReference>
<dbReference type="GO" id="GO:0005200">
    <property type="term" value="F:structural constituent of cytoskeleton"/>
    <property type="evidence" value="ECO:0000318"/>
    <property type="project" value="GO_Central"/>
</dbReference>
<dbReference type="GO" id="GO:0000226">
    <property type="term" value="P:microtubule cytoskeleton organization"/>
    <property type="evidence" value="ECO:0000318"/>
    <property type="project" value="GO_Central"/>
</dbReference>
<dbReference type="GO" id="GO:0000278">
    <property type="term" value="P:mitotic cell cycle"/>
    <property type="evidence" value="ECO:0000318"/>
    <property type="project" value="GO_Central"/>
</dbReference>
<dbReference type="GO" id="GO:0000280">
    <property type="term" value="P:nuclear division"/>
    <property type="evidence" value="ECO:0000318"/>
    <property type="project" value="GO_Central"/>
</dbReference>
<dbReference type="GO" id="GO:0098863">
    <property type="term" value="P:nuclear migration by microtubule mediated pushing forces"/>
    <property type="evidence" value="ECO:0000318"/>
    <property type="project" value="GO_Central"/>
</dbReference>
<dbReference type="CDD" id="cd02186">
    <property type="entry name" value="alpha_tubulin"/>
    <property type="match status" value="1"/>
</dbReference>
<dbReference type="FunFam" id="1.10.287.600:FF:000001">
    <property type="entry name" value="Tubulin alpha chain"/>
    <property type="match status" value="1"/>
</dbReference>
<dbReference type="FunFam" id="3.30.1330.20:FF:000006">
    <property type="entry name" value="Tubulin alpha chain"/>
    <property type="match status" value="1"/>
</dbReference>
<dbReference type="FunFam" id="3.40.50.1440:FF:000011">
    <property type="entry name" value="Tubulin alpha chain"/>
    <property type="match status" value="1"/>
</dbReference>
<dbReference type="Gene3D" id="1.10.287.600">
    <property type="entry name" value="Helix hairpin bin"/>
    <property type="match status" value="1"/>
</dbReference>
<dbReference type="Gene3D" id="3.30.1330.20">
    <property type="entry name" value="Tubulin/FtsZ, C-terminal domain"/>
    <property type="match status" value="1"/>
</dbReference>
<dbReference type="Gene3D" id="3.40.50.1440">
    <property type="entry name" value="Tubulin/FtsZ, GTPase domain"/>
    <property type="match status" value="1"/>
</dbReference>
<dbReference type="InterPro" id="IPR002452">
    <property type="entry name" value="Alpha_tubulin"/>
</dbReference>
<dbReference type="InterPro" id="IPR008280">
    <property type="entry name" value="Tub_FtsZ_C"/>
</dbReference>
<dbReference type="InterPro" id="IPR000217">
    <property type="entry name" value="Tubulin"/>
</dbReference>
<dbReference type="InterPro" id="IPR037103">
    <property type="entry name" value="Tubulin/FtsZ-like_C"/>
</dbReference>
<dbReference type="InterPro" id="IPR018316">
    <property type="entry name" value="Tubulin/FtsZ_2-layer-sand-dom"/>
</dbReference>
<dbReference type="InterPro" id="IPR036525">
    <property type="entry name" value="Tubulin/FtsZ_GTPase_sf"/>
</dbReference>
<dbReference type="InterPro" id="IPR023123">
    <property type="entry name" value="Tubulin_C"/>
</dbReference>
<dbReference type="InterPro" id="IPR017975">
    <property type="entry name" value="Tubulin_CS"/>
</dbReference>
<dbReference type="InterPro" id="IPR003008">
    <property type="entry name" value="Tubulin_FtsZ_GTPase"/>
</dbReference>
<dbReference type="PANTHER" id="PTHR11588">
    <property type="entry name" value="TUBULIN"/>
    <property type="match status" value="1"/>
</dbReference>
<dbReference type="Pfam" id="PF00091">
    <property type="entry name" value="Tubulin"/>
    <property type="match status" value="1"/>
</dbReference>
<dbReference type="Pfam" id="PF03953">
    <property type="entry name" value="Tubulin_C"/>
    <property type="match status" value="1"/>
</dbReference>
<dbReference type="PRINTS" id="PR01162">
    <property type="entry name" value="ALPHATUBULIN"/>
</dbReference>
<dbReference type="PRINTS" id="PR01161">
    <property type="entry name" value="TUBULIN"/>
</dbReference>
<dbReference type="SMART" id="SM00864">
    <property type="entry name" value="Tubulin"/>
    <property type="match status" value="1"/>
</dbReference>
<dbReference type="SMART" id="SM00865">
    <property type="entry name" value="Tubulin_C"/>
    <property type="match status" value="1"/>
</dbReference>
<dbReference type="SUPFAM" id="SSF55307">
    <property type="entry name" value="Tubulin C-terminal domain-like"/>
    <property type="match status" value="1"/>
</dbReference>
<dbReference type="SUPFAM" id="SSF52490">
    <property type="entry name" value="Tubulin nucleotide-binding domain-like"/>
    <property type="match status" value="1"/>
</dbReference>
<dbReference type="PROSITE" id="PS00227">
    <property type="entry name" value="TUBULIN"/>
    <property type="match status" value="1"/>
</dbReference>
<name>TBA1_NEUCR</name>
<comment type="function">
    <text>Tubulin is the major constituent of microtubules, a cylinder consisting of laterally associated linear protofilaments composed of alpha- and beta-tubulin heterodimers. Microtubules grow by the addition of GTP-tubulin dimers to the microtubule end, where a stabilizing cap forms. Below the cap, tubulin dimers are in GDP-bound state, owing to GTPase activity of alpha-tubulin.</text>
</comment>
<comment type="catalytic activity">
    <reaction evidence="2">
        <text>GTP + H2O = GDP + phosphate + H(+)</text>
        <dbReference type="Rhea" id="RHEA:19669"/>
        <dbReference type="ChEBI" id="CHEBI:15377"/>
        <dbReference type="ChEBI" id="CHEBI:15378"/>
        <dbReference type="ChEBI" id="CHEBI:37565"/>
        <dbReference type="ChEBI" id="CHEBI:43474"/>
        <dbReference type="ChEBI" id="CHEBI:58189"/>
    </reaction>
    <physiologicalReaction direction="left-to-right" evidence="2">
        <dbReference type="Rhea" id="RHEA:19670"/>
    </physiologicalReaction>
</comment>
<comment type="cofactor">
    <cofactor evidence="2">
        <name>Mg(2+)</name>
        <dbReference type="ChEBI" id="CHEBI:18420"/>
    </cofactor>
</comment>
<comment type="subunit">
    <text>Dimer of alpha and beta chains. A typical microtubule is a hollow water-filled tube with an outer diameter of 25 nm and an inner diameter of 15 nM. Alpha-beta heterodimers associate head-to-tail to form protofilaments running lengthwise along the microtubule wall with the beta-tubulin subunit facing the microtubule plus end conferring a structural polarity. Microtubules usually have 13 protofilaments but different protofilament numbers can be found in some organisms and specialized cells.</text>
</comment>
<comment type="subcellular location">
    <subcellularLocation>
        <location>Cytoplasm</location>
        <location>Cytoskeleton</location>
    </subcellularLocation>
</comment>
<comment type="similarity">
    <text evidence="3">Belongs to the tubulin family.</text>
</comment>
<organism>
    <name type="scientific">Neurospora crassa (strain ATCC 24698 / 74-OR23-1A / CBS 708.71 / DSM 1257 / FGSC 987)</name>
    <dbReference type="NCBI Taxonomy" id="367110"/>
    <lineage>
        <taxon>Eukaryota</taxon>
        <taxon>Fungi</taxon>
        <taxon>Dikarya</taxon>
        <taxon>Ascomycota</taxon>
        <taxon>Pezizomycotina</taxon>
        <taxon>Sordariomycetes</taxon>
        <taxon>Sordariomycetidae</taxon>
        <taxon>Sordariales</taxon>
        <taxon>Sordariaceae</taxon>
        <taxon>Neurospora</taxon>
    </lineage>
</organism>
<gene>
    <name type="primary">tba-1</name>
    <name type="ORF">NCU09132</name>
</gene>
<feature type="chain" id="PRO_0000048199" description="Tubulin alpha-A chain">
    <location>
        <begin position="1"/>
        <end position="454"/>
    </location>
</feature>
<feature type="active site" evidence="2">
    <location>
        <position position="255"/>
    </location>
</feature>
<feature type="binding site" evidence="2">
    <location>
        <position position="12"/>
    </location>
    <ligand>
        <name>GTP</name>
        <dbReference type="ChEBI" id="CHEBI:37565"/>
    </ligand>
</feature>
<feature type="binding site" evidence="2">
    <location>
        <position position="72"/>
    </location>
    <ligand>
        <name>GTP</name>
        <dbReference type="ChEBI" id="CHEBI:37565"/>
    </ligand>
</feature>
<feature type="binding site" evidence="2">
    <location>
        <position position="72"/>
    </location>
    <ligand>
        <name>Mg(2+)</name>
        <dbReference type="ChEBI" id="CHEBI:18420"/>
    </ligand>
</feature>
<feature type="binding site" evidence="2">
    <location>
        <position position="141"/>
    </location>
    <ligand>
        <name>GTP</name>
        <dbReference type="ChEBI" id="CHEBI:37565"/>
    </ligand>
</feature>
<feature type="binding site" evidence="2">
    <location>
        <position position="145"/>
    </location>
    <ligand>
        <name>GTP</name>
        <dbReference type="ChEBI" id="CHEBI:37565"/>
    </ligand>
</feature>
<feature type="binding site" evidence="2">
    <location>
        <position position="146"/>
    </location>
    <ligand>
        <name>GTP</name>
        <dbReference type="ChEBI" id="CHEBI:37565"/>
    </ligand>
</feature>
<feature type="binding site" evidence="2">
    <location>
        <position position="180"/>
    </location>
    <ligand>
        <name>GTP</name>
        <dbReference type="ChEBI" id="CHEBI:37565"/>
    </ligand>
</feature>
<feature type="binding site" evidence="2">
    <location>
        <position position="207"/>
    </location>
    <ligand>
        <name>GTP</name>
        <dbReference type="ChEBI" id="CHEBI:37565"/>
    </ligand>
</feature>
<feature type="binding site" evidence="2">
    <location>
        <position position="229"/>
    </location>
    <ligand>
        <name>GTP</name>
        <dbReference type="ChEBI" id="CHEBI:37565"/>
    </ligand>
</feature>
<feature type="site" description="Involved in polymerization" evidence="1">
    <location>
        <position position="453"/>
    </location>
</feature>
<feature type="sequence conflict" description="In Ref. 1; CAA55940." evidence="3" ref="1">
    <original>VYDI</original>
    <variation>GMT</variation>
    <location>
        <begin position="210"/>
        <end position="213"/>
    </location>
</feature>
<feature type="sequence conflict" description="In Ref. 1; CAA55940." evidence="3" ref="1">
    <original>A</original>
    <variation>R</variation>
    <location>
        <position position="432"/>
    </location>
</feature>
<evidence type="ECO:0000250" key="1"/>
<evidence type="ECO:0000250" key="2">
    <source>
        <dbReference type="UniProtKB" id="P68363"/>
    </source>
</evidence>
<evidence type="ECO:0000305" key="3"/>
<sequence>MRGEVVHIHLGQAGTQLGNSAWELYLLEHGLTQDGRKDPDSTVAGEGGSYDTFFTESSNGKYVPRSLFVDLDPSPIDEIRTGPYRQLFHPELLISGKEDAANNYARGHYTVGKEMAENVLDRIRKITDNCHSLQGFLVFHSFGGGTGSGFGALVLERLAQDYAKKCKLEFSVYPAPRVATAVVEPYNAVLATHSTLEHSDVTFLVDNEAVYDICRRNLDIPRPSYEHLNRLIAQVVSSITSSLRFDGALNVDLNEFQTNLVPFPRVHYPLISYAPVISATKSAHESFKTSELTLQCFEPNNQMVVCDPRNGKYMAVALLYRGDVVPRDTSAAVAALKAKSSFNLVEWCPTGFKIGINHQKPMSVPTASPADGGLASVDRSVSMLSNTTAIAEAWSRLDHKFDLMYSKRAFVHWYVGEGMEEGEFSEAREDLASLEKDYEEVAGDYNDVDVDAEY</sequence>